<sequence length="363" mass="39686">MSTQPIKVLIVDDSALIRSLLTDIINSQTDMEVVGVAPDPLVAREKIKALNPDVLTLDVEMPRMDGLVFLEKLMRLRPMPVLMVSSLTEKSSFLTLRALELGAVDFVTKPKIDISRGMQEYAREITDKLRVAAKARVRQPPHVHLSVERKNTADAVLPMEHRTFSSTEKIIVIGASTGGTEALKSFLVAMPADSPGILITQHMPEAFTRTFAQRLNSLCRISVKEAEHGERILPGHAYVAPGNRHLLLARSGANYVVELSDGPPVSRHRPSVDVLFRSAANRAGRNAVGIIMTGMGDDGAAGMLEMREAGAYTFAQDEKSCVVFGMPKEAIARGGVDEVAPLGEMPRRLFGWLESQGNRAFRV</sequence>
<keyword id="KW-0145">Chemotaxis</keyword>
<keyword id="KW-0963">Cytoplasm</keyword>
<keyword id="KW-0378">Hydrolase</keyword>
<keyword id="KW-0597">Phosphoprotein</keyword>
<keyword id="KW-1185">Reference proteome</keyword>
<dbReference type="EC" id="3.1.1.61" evidence="1"/>
<dbReference type="EC" id="3.5.1.44" evidence="1"/>
<dbReference type="EMBL" id="CP000148">
    <property type="protein sequence ID" value="ABB31315.1"/>
    <property type="molecule type" value="Genomic_DNA"/>
</dbReference>
<dbReference type="RefSeq" id="WP_004513731.1">
    <property type="nucleotide sequence ID" value="NC_007517.1"/>
</dbReference>
<dbReference type="SMR" id="Q39WQ9"/>
<dbReference type="STRING" id="269799.Gmet_1075"/>
<dbReference type="KEGG" id="gme:Gmet_1075"/>
<dbReference type="eggNOG" id="COG2201">
    <property type="taxonomic scope" value="Bacteria"/>
</dbReference>
<dbReference type="HOGENOM" id="CLU_000445_51_0_7"/>
<dbReference type="Proteomes" id="UP000007073">
    <property type="component" value="Chromosome"/>
</dbReference>
<dbReference type="GO" id="GO:0005737">
    <property type="term" value="C:cytoplasm"/>
    <property type="evidence" value="ECO:0007669"/>
    <property type="project" value="UniProtKB-SubCell"/>
</dbReference>
<dbReference type="GO" id="GO:0000156">
    <property type="term" value="F:phosphorelay response regulator activity"/>
    <property type="evidence" value="ECO:0007669"/>
    <property type="project" value="InterPro"/>
</dbReference>
<dbReference type="GO" id="GO:0008984">
    <property type="term" value="F:protein-glutamate methylesterase activity"/>
    <property type="evidence" value="ECO:0007669"/>
    <property type="project" value="UniProtKB-UniRule"/>
</dbReference>
<dbReference type="GO" id="GO:0050568">
    <property type="term" value="F:protein-glutamine glutaminase activity"/>
    <property type="evidence" value="ECO:0007669"/>
    <property type="project" value="UniProtKB-UniRule"/>
</dbReference>
<dbReference type="GO" id="GO:0006935">
    <property type="term" value="P:chemotaxis"/>
    <property type="evidence" value="ECO:0007669"/>
    <property type="project" value="UniProtKB-UniRule"/>
</dbReference>
<dbReference type="CDD" id="cd16432">
    <property type="entry name" value="CheB_Rec"/>
    <property type="match status" value="1"/>
</dbReference>
<dbReference type="CDD" id="cd17541">
    <property type="entry name" value="REC_CheB-like"/>
    <property type="match status" value="1"/>
</dbReference>
<dbReference type="FunFam" id="3.40.50.2300:FF:000060">
    <property type="entry name" value="Protein-glutamate methylesterase/protein-glutamine glutaminase"/>
    <property type="match status" value="1"/>
</dbReference>
<dbReference type="Gene3D" id="3.40.50.2300">
    <property type="match status" value="1"/>
</dbReference>
<dbReference type="Gene3D" id="3.40.50.180">
    <property type="entry name" value="Methylesterase CheB, C-terminal domain"/>
    <property type="match status" value="1"/>
</dbReference>
<dbReference type="HAMAP" id="MF_00099">
    <property type="entry name" value="CheB_chemtxs"/>
    <property type="match status" value="1"/>
</dbReference>
<dbReference type="InterPro" id="IPR008248">
    <property type="entry name" value="CheB-like"/>
</dbReference>
<dbReference type="InterPro" id="IPR035909">
    <property type="entry name" value="CheB_C"/>
</dbReference>
<dbReference type="InterPro" id="IPR011006">
    <property type="entry name" value="CheY-like_superfamily"/>
</dbReference>
<dbReference type="InterPro" id="IPR000673">
    <property type="entry name" value="Sig_transdc_resp-reg_Me-estase"/>
</dbReference>
<dbReference type="InterPro" id="IPR001789">
    <property type="entry name" value="Sig_transdc_resp-reg_receiver"/>
</dbReference>
<dbReference type="NCBIfam" id="NF001965">
    <property type="entry name" value="PRK00742.1"/>
    <property type="match status" value="1"/>
</dbReference>
<dbReference type="NCBIfam" id="NF009206">
    <property type="entry name" value="PRK12555.1"/>
    <property type="match status" value="1"/>
</dbReference>
<dbReference type="PANTHER" id="PTHR42872">
    <property type="entry name" value="PROTEIN-GLUTAMATE METHYLESTERASE/PROTEIN-GLUTAMINE GLUTAMINASE"/>
    <property type="match status" value="1"/>
</dbReference>
<dbReference type="PANTHER" id="PTHR42872:SF6">
    <property type="entry name" value="PROTEIN-GLUTAMATE METHYLESTERASE_PROTEIN-GLUTAMINE GLUTAMINASE"/>
    <property type="match status" value="1"/>
</dbReference>
<dbReference type="Pfam" id="PF01339">
    <property type="entry name" value="CheB_methylest"/>
    <property type="match status" value="1"/>
</dbReference>
<dbReference type="Pfam" id="PF00072">
    <property type="entry name" value="Response_reg"/>
    <property type="match status" value="1"/>
</dbReference>
<dbReference type="PIRSF" id="PIRSF000876">
    <property type="entry name" value="RR_chemtxs_CheB"/>
    <property type="match status" value="1"/>
</dbReference>
<dbReference type="SMART" id="SM00448">
    <property type="entry name" value="REC"/>
    <property type="match status" value="1"/>
</dbReference>
<dbReference type="SUPFAM" id="SSF52172">
    <property type="entry name" value="CheY-like"/>
    <property type="match status" value="1"/>
</dbReference>
<dbReference type="SUPFAM" id="SSF52738">
    <property type="entry name" value="Methylesterase CheB, C-terminal domain"/>
    <property type="match status" value="1"/>
</dbReference>
<dbReference type="PROSITE" id="PS50122">
    <property type="entry name" value="CHEB"/>
    <property type="match status" value="1"/>
</dbReference>
<dbReference type="PROSITE" id="PS50110">
    <property type="entry name" value="RESPONSE_REGULATORY"/>
    <property type="match status" value="1"/>
</dbReference>
<reference key="1">
    <citation type="journal article" date="2009" name="BMC Microbiol.">
        <title>The genome sequence of Geobacter metallireducens: features of metabolism, physiology and regulation common and dissimilar to Geobacter sulfurreducens.</title>
        <authorList>
            <person name="Aklujkar M."/>
            <person name="Krushkal J."/>
            <person name="DiBartolo G."/>
            <person name="Lapidus A."/>
            <person name="Land M.L."/>
            <person name="Lovley D.R."/>
        </authorList>
    </citation>
    <scope>NUCLEOTIDE SEQUENCE [LARGE SCALE GENOMIC DNA]</scope>
    <source>
        <strain>ATCC 53774 / DSM 7210 / GS-15</strain>
    </source>
</reference>
<accession>Q39WQ9</accession>
<feature type="chain" id="PRO_0000264276" description="Protein-glutamate methylesterase/protein-glutamine glutaminase 1">
    <location>
        <begin position="1"/>
        <end position="363"/>
    </location>
</feature>
<feature type="domain" description="Response regulatory" evidence="1">
    <location>
        <begin position="7"/>
        <end position="124"/>
    </location>
</feature>
<feature type="domain" description="CheB-type methylesterase" evidence="1">
    <location>
        <begin position="164"/>
        <end position="356"/>
    </location>
</feature>
<feature type="active site" evidence="1">
    <location>
        <position position="176"/>
    </location>
</feature>
<feature type="active site" evidence="1">
    <location>
        <position position="202"/>
    </location>
</feature>
<feature type="active site" evidence="1">
    <location>
        <position position="298"/>
    </location>
</feature>
<feature type="modified residue" description="4-aspartylphosphate" evidence="1">
    <location>
        <position position="58"/>
    </location>
</feature>
<organism>
    <name type="scientific">Geobacter metallireducens (strain ATCC 53774 / DSM 7210 / GS-15)</name>
    <dbReference type="NCBI Taxonomy" id="269799"/>
    <lineage>
        <taxon>Bacteria</taxon>
        <taxon>Pseudomonadati</taxon>
        <taxon>Thermodesulfobacteriota</taxon>
        <taxon>Desulfuromonadia</taxon>
        <taxon>Geobacterales</taxon>
        <taxon>Geobacteraceae</taxon>
        <taxon>Geobacter</taxon>
    </lineage>
</organism>
<name>CHEB1_GEOMG</name>
<evidence type="ECO:0000255" key="1">
    <source>
        <dbReference type="HAMAP-Rule" id="MF_00099"/>
    </source>
</evidence>
<gene>
    <name evidence="1" type="primary">cheB1</name>
    <name type="ordered locus">Gmet_1075</name>
</gene>
<proteinExistence type="inferred from homology"/>
<comment type="function">
    <text evidence="1">Involved in chemotaxis. Part of a chemotaxis signal transduction system that modulates chemotaxis in response to various stimuli. Catalyzes the demethylation of specific methylglutamate residues introduced into the chemoreceptors (methyl-accepting chemotaxis proteins or MCP) by CheR. Also mediates the irreversible deamidation of specific glutamine residues to glutamic acid.</text>
</comment>
<comment type="catalytic activity">
    <reaction evidence="1">
        <text>[protein]-L-glutamate 5-O-methyl ester + H2O = L-glutamyl-[protein] + methanol + H(+)</text>
        <dbReference type="Rhea" id="RHEA:23236"/>
        <dbReference type="Rhea" id="RHEA-COMP:10208"/>
        <dbReference type="Rhea" id="RHEA-COMP:10311"/>
        <dbReference type="ChEBI" id="CHEBI:15377"/>
        <dbReference type="ChEBI" id="CHEBI:15378"/>
        <dbReference type="ChEBI" id="CHEBI:17790"/>
        <dbReference type="ChEBI" id="CHEBI:29973"/>
        <dbReference type="ChEBI" id="CHEBI:82795"/>
        <dbReference type="EC" id="3.1.1.61"/>
    </reaction>
</comment>
<comment type="catalytic activity">
    <reaction evidence="1">
        <text>L-glutaminyl-[protein] + H2O = L-glutamyl-[protein] + NH4(+)</text>
        <dbReference type="Rhea" id="RHEA:16441"/>
        <dbReference type="Rhea" id="RHEA-COMP:10207"/>
        <dbReference type="Rhea" id="RHEA-COMP:10208"/>
        <dbReference type="ChEBI" id="CHEBI:15377"/>
        <dbReference type="ChEBI" id="CHEBI:28938"/>
        <dbReference type="ChEBI" id="CHEBI:29973"/>
        <dbReference type="ChEBI" id="CHEBI:30011"/>
        <dbReference type="EC" id="3.5.1.44"/>
    </reaction>
</comment>
<comment type="subcellular location">
    <subcellularLocation>
        <location evidence="1">Cytoplasm</location>
    </subcellularLocation>
</comment>
<comment type="domain">
    <text evidence="1">Contains a C-terminal catalytic domain, and an N-terminal region which modulates catalytic activity.</text>
</comment>
<comment type="PTM">
    <text evidence="1">Phosphorylated by CheA. Phosphorylation of the N-terminal regulatory domain activates the methylesterase activity.</text>
</comment>
<comment type="similarity">
    <text evidence="1">Belongs to the CheB family.</text>
</comment>
<protein>
    <recommendedName>
        <fullName evidence="1">Protein-glutamate methylesterase/protein-glutamine glutaminase 1</fullName>
        <ecNumber evidence="1">3.1.1.61</ecNumber>
        <ecNumber evidence="1">3.5.1.44</ecNumber>
    </recommendedName>
</protein>